<reference key="1">
    <citation type="journal article" date="1997" name="Gene">
        <title>Sequence analysis and expression of the polyhedrin gene of Choristoneura fumiferana cytoplasmic polyhedrosis virus (CfCPV).</title>
        <authorList>
            <person name="Echeverry F."/>
            <person name="Bergeron J."/>
            <person name="Kaupp W."/>
            <person name="Guertin C."/>
            <person name="Arella M."/>
        </authorList>
    </citation>
    <scope>NUCLEOTIDE SEQUENCE [GENOMIC RNA]</scope>
    <scope>SELF-ASSEMBLY</scope>
</reference>
<dbReference type="EMBL" id="U95954">
    <property type="protein sequence ID" value="AAC58535.1"/>
    <property type="molecule type" value="Genomic_RNA"/>
</dbReference>
<dbReference type="SMR" id="O01999"/>
<dbReference type="GO" id="GO:0039679">
    <property type="term" value="C:viral occlusion body"/>
    <property type="evidence" value="ECO:0007669"/>
    <property type="project" value="UniProtKB-KW"/>
</dbReference>
<dbReference type="InterPro" id="IPR035239">
    <property type="entry name" value="CPV_Polyhedrin"/>
</dbReference>
<dbReference type="Pfam" id="PF17515">
    <property type="entry name" value="CPV_Polyhedrin"/>
    <property type="match status" value="1"/>
</dbReference>
<sequence length="258" mass="29769">MPYERDCLDNDVRLRAQNLRTHEINLAPYVPGATLRADIIAKYPDGRYKVFDFTAPNFIKGVISYKEFAWHYGHTYDNDDQLDDHNANTFNNVTLANSGSTNPPRDITYPETVMIVLNGNFNIAQCRAFPVNQYGLTHKDWRLSRNNSPDPIHNCQWTPIGCYSNFFVMKFNQREGLRFILPACSDSAYNQYNSGTLAEIIWETVKHKTVKWFTGERQAINWFTQKNLAYPDSANFIASRAEANYIGNGNFSDPSRYY</sequence>
<feature type="chain" id="PRO_0000222808" description="Polyhedrin">
    <location>
        <begin position="1"/>
        <end position="258"/>
    </location>
</feature>
<organism>
    <name type="scientific">Choristoneura fumiferana cypovirus</name>
    <name type="common">CfCPV</name>
    <name type="synonym">Choristoneura fumiferana cytoplasmic polyhedrosis virus</name>
    <dbReference type="NCBI Taxonomy" id="59730"/>
    <lineage>
        <taxon>Viruses</taxon>
        <taxon>Riboviria</taxon>
        <taxon>Orthornavirae</taxon>
        <taxon>Duplornaviricota</taxon>
        <taxon>Resentoviricetes</taxon>
        <taxon>Reovirales</taxon>
        <taxon>Spinareoviridae</taxon>
        <taxon>Cypovirus</taxon>
        <taxon>Cypovirus 16</taxon>
    </lineage>
</organism>
<keyword id="KW-0842">Viral occlusion body</keyword>
<organismHost>
    <name type="scientific">Choristoneura fumiferana</name>
    <name type="common">Spruce budworm moth</name>
    <name type="synonym">Archips fumiferana</name>
    <dbReference type="NCBI Taxonomy" id="7141"/>
</organismHost>
<protein>
    <recommendedName>
        <fullName>Polyhedrin</fullName>
    </recommendedName>
    <alternativeName>
        <fullName>C-polyhedrin</fullName>
    </alternativeName>
</protein>
<comment type="function">
    <text>Major component of the virus occlusion bodies, which are large proteinaceous structures (polyhedra), that protect the virus from the outside environment for extended periods until they are ingested by insect larvae.</text>
</comment>
<comment type="subunit">
    <text>Forms crystal-like bodies by self-assembly.</text>
</comment>
<proteinExistence type="predicted"/>
<accession>O01999</accession>
<name>PYHD_CPVCS</name>